<reference key="1">
    <citation type="journal article" date="1992" name="Proc. Natl. Acad. Sci. U.S.A.">
        <title>Function and evolution of a minimal plastid genome from a nonphotosynthetic parasitic plant.</title>
        <authorList>
            <person name="Wolfe K.H."/>
            <person name="Morden C.W."/>
            <person name="Palmer J.D."/>
        </authorList>
    </citation>
    <scope>NUCLEOTIDE SEQUENCE [LARGE SCALE GENOMIC DNA]</scope>
</reference>
<reference key="2">
    <citation type="journal article" date="1992" name="J. Mol. Evol.">
        <title>Rapid evolution of the plastid translational apparatus in a nonphotosynthetic plant: loss or accelerated sequence evolution of tRNA and ribosomal protein genes.</title>
        <authorList>
            <person name="Wolfe K.H."/>
            <person name="Morden C.W."/>
            <person name="Ems S.C."/>
            <person name="Palmer J.D."/>
        </authorList>
    </citation>
    <scope>NUCLEOTIDE SEQUENCE [GENOMIC DNA]</scope>
</reference>
<feature type="initiator methionine" description="Removed" evidence="1">
    <location>
        <position position="1"/>
    </location>
</feature>
<feature type="chain" id="PRO_0000177286" description="Large ribosomal subunit protein bL20c">
    <location>
        <begin position="2"/>
        <end position="128"/>
    </location>
</feature>
<geneLocation type="non-photosynthetic plastid"/>
<dbReference type="EMBL" id="M81884">
    <property type="protein sequence ID" value="AAA65857.1"/>
    <property type="molecule type" value="Genomic_DNA"/>
</dbReference>
<dbReference type="PIR" id="S78387">
    <property type="entry name" value="S78387"/>
</dbReference>
<dbReference type="RefSeq" id="NP_054383.1">
    <property type="nucleotide sequence ID" value="NC_001568.1"/>
</dbReference>
<dbReference type="SMR" id="P30067"/>
<dbReference type="GeneID" id="801421"/>
<dbReference type="GO" id="GO:0009536">
    <property type="term" value="C:plastid"/>
    <property type="evidence" value="ECO:0007669"/>
    <property type="project" value="UniProtKB-SubCell"/>
</dbReference>
<dbReference type="GO" id="GO:1990904">
    <property type="term" value="C:ribonucleoprotein complex"/>
    <property type="evidence" value="ECO:0007669"/>
    <property type="project" value="UniProtKB-KW"/>
</dbReference>
<dbReference type="GO" id="GO:0005840">
    <property type="term" value="C:ribosome"/>
    <property type="evidence" value="ECO:0007669"/>
    <property type="project" value="UniProtKB-KW"/>
</dbReference>
<dbReference type="GO" id="GO:0019843">
    <property type="term" value="F:rRNA binding"/>
    <property type="evidence" value="ECO:0007669"/>
    <property type="project" value="UniProtKB-KW"/>
</dbReference>
<dbReference type="GO" id="GO:0003735">
    <property type="term" value="F:structural constituent of ribosome"/>
    <property type="evidence" value="ECO:0007669"/>
    <property type="project" value="InterPro"/>
</dbReference>
<dbReference type="GO" id="GO:0006412">
    <property type="term" value="P:translation"/>
    <property type="evidence" value="ECO:0007669"/>
    <property type="project" value="InterPro"/>
</dbReference>
<dbReference type="CDD" id="cd07026">
    <property type="entry name" value="Ribosomal_L20"/>
    <property type="match status" value="1"/>
</dbReference>
<dbReference type="FunFam" id="1.10.1900.20:FF:000001">
    <property type="entry name" value="50S ribosomal protein L20"/>
    <property type="match status" value="1"/>
</dbReference>
<dbReference type="Gene3D" id="6.10.160.10">
    <property type="match status" value="1"/>
</dbReference>
<dbReference type="Gene3D" id="1.10.1900.20">
    <property type="entry name" value="Ribosomal protein L20"/>
    <property type="match status" value="1"/>
</dbReference>
<dbReference type="HAMAP" id="MF_00382">
    <property type="entry name" value="Ribosomal_bL20"/>
    <property type="match status" value="1"/>
</dbReference>
<dbReference type="InterPro" id="IPR005813">
    <property type="entry name" value="Ribosomal_bL20"/>
</dbReference>
<dbReference type="InterPro" id="IPR049946">
    <property type="entry name" value="RIBOSOMAL_L20_CS"/>
</dbReference>
<dbReference type="InterPro" id="IPR035566">
    <property type="entry name" value="Ribosomal_protein_bL20_C"/>
</dbReference>
<dbReference type="NCBIfam" id="TIGR01032">
    <property type="entry name" value="rplT_bact"/>
    <property type="match status" value="1"/>
</dbReference>
<dbReference type="PANTHER" id="PTHR10986">
    <property type="entry name" value="39S RIBOSOMAL PROTEIN L20"/>
    <property type="match status" value="1"/>
</dbReference>
<dbReference type="Pfam" id="PF00453">
    <property type="entry name" value="Ribosomal_L20"/>
    <property type="match status" value="1"/>
</dbReference>
<dbReference type="PRINTS" id="PR00062">
    <property type="entry name" value="RIBOSOMALL20"/>
</dbReference>
<dbReference type="SUPFAM" id="SSF74731">
    <property type="entry name" value="Ribosomal protein L20"/>
    <property type="match status" value="1"/>
</dbReference>
<dbReference type="PROSITE" id="PS00937">
    <property type="entry name" value="RIBOSOMAL_L20"/>
    <property type="match status" value="1"/>
</dbReference>
<accession>P30067</accession>
<evidence type="ECO:0000250" key="1"/>
<evidence type="ECO:0000305" key="2"/>
<gene>
    <name type="primary">rpl20</name>
</gene>
<proteinExistence type="inferred from homology"/>
<keyword id="KW-0934">Plastid</keyword>
<keyword id="KW-0687">Ribonucleoprotein</keyword>
<keyword id="KW-0689">Ribosomal protein</keyword>
<keyword id="KW-0694">RNA-binding</keyword>
<keyword id="KW-0699">rRNA-binding</keyword>
<protein>
    <recommendedName>
        <fullName evidence="2">Large ribosomal subunit protein bL20c</fullName>
    </recommendedName>
    <alternativeName>
        <fullName>50S ribosomal protein L20, plastid</fullName>
    </alternativeName>
</protein>
<name>RK20_EPIVI</name>
<comment type="function">
    <text evidence="1">Binds directly to 23S ribosomal RNA and is necessary for the in vitro assembly process of the 50S ribosomal subunit. It is not involved in the protein synthesizing functions of that subunit (By similarity).</text>
</comment>
<comment type="subcellular location">
    <subcellularLocation>
        <location>Plastid</location>
    </subcellularLocation>
</comment>
<comment type="similarity">
    <text evidence="2">Belongs to the bacterial ribosomal protein bL20 family.</text>
</comment>
<sequence>MTRIKRGYIARRRIKKFRLFASSFLNAHSRLTRTITQQKIRALVSSDRDRNNKKRKFRSLWITRINAVIREEGVSYSYKNFIYAQYKIQLLINRKILAQIAILNRNFFYMIFNEIRKEADLKEYIRIN</sequence>
<organism>
    <name type="scientific">Epifagus virginiana</name>
    <name type="common">Beechdrops</name>
    <name type="synonym">Orobanche virginiana</name>
    <dbReference type="NCBI Taxonomy" id="4177"/>
    <lineage>
        <taxon>Eukaryota</taxon>
        <taxon>Viridiplantae</taxon>
        <taxon>Streptophyta</taxon>
        <taxon>Embryophyta</taxon>
        <taxon>Tracheophyta</taxon>
        <taxon>Spermatophyta</taxon>
        <taxon>Magnoliopsida</taxon>
        <taxon>eudicotyledons</taxon>
        <taxon>Gunneridae</taxon>
        <taxon>Pentapetalae</taxon>
        <taxon>asterids</taxon>
        <taxon>lamiids</taxon>
        <taxon>Lamiales</taxon>
        <taxon>Orobanchaceae</taxon>
        <taxon>Orobancheae</taxon>
        <taxon>Epifagus</taxon>
    </lineage>
</organism>